<organism>
    <name type="scientific">Merluccius polli</name>
    <name type="common">Benguela hake</name>
    <name type="synonym">Merluccius cadenati</name>
    <dbReference type="NCBI Taxonomy" id="89951"/>
    <lineage>
        <taxon>Eukaryota</taxon>
        <taxon>Metazoa</taxon>
        <taxon>Chordata</taxon>
        <taxon>Craniata</taxon>
        <taxon>Vertebrata</taxon>
        <taxon>Euteleostomi</taxon>
        <taxon>Actinopterygii</taxon>
        <taxon>Neopterygii</taxon>
        <taxon>Teleostei</taxon>
        <taxon>Neoteleostei</taxon>
        <taxon>Acanthomorphata</taxon>
        <taxon>Zeiogadaria</taxon>
        <taxon>Gadariae</taxon>
        <taxon>Gadiformes</taxon>
        <taxon>Gadoidei</taxon>
        <taxon>Merlucciidae</taxon>
        <taxon>Merluccius</taxon>
    </lineage>
</organism>
<dbReference type="SMR" id="P86772"/>
<dbReference type="iPTMnet" id="P86772"/>
<dbReference type="GO" id="GO:0005737">
    <property type="term" value="C:cytoplasm"/>
    <property type="evidence" value="ECO:0007669"/>
    <property type="project" value="TreeGrafter"/>
</dbReference>
<dbReference type="GO" id="GO:0005509">
    <property type="term" value="F:calcium ion binding"/>
    <property type="evidence" value="ECO:0007669"/>
    <property type="project" value="InterPro"/>
</dbReference>
<dbReference type="Gene3D" id="1.10.238.10">
    <property type="entry name" value="EF-hand"/>
    <property type="match status" value="1"/>
</dbReference>
<dbReference type="InterPro" id="IPR011992">
    <property type="entry name" value="EF-hand-dom_pair"/>
</dbReference>
<dbReference type="InterPro" id="IPR018247">
    <property type="entry name" value="EF_Hand_1_Ca_BS"/>
</dbReference>
<dbReference type="InterPro" id="IPR002048">
    <property type="entry name" value="EF_hand_dom"/>
</dbReference>
<dbReference type="InterPro" id="IPR008080">
    <property type="entry name" value="Parvalbumin"/>
</dbReference>
<dbReference type="PANTHER" id="PTHR11653:SF12">
    <property type="entry name" value="PARVALBUMIN"/>
    <property type="match status" value="1"/>
</dbReference>
<dbReference type="PANTHER" id="PTHR11653">
    <property type="entry name" value="PARVALBUMIN ALPHA"/>
    <property type="match status" value="1"/>
</dbReference>
<dbReference type="Pfam" id="PF13405">
    <property type="entry name" value="EF-hand_6"/>
    <property type="match status" value="1"/>
</dbReference>
<dbReference type="PRINTS" id="PR01697">
    <property type="entry name" value="PARVALBUMIN"/>
</dbReference>
<dbReference type="SMART" id="SM00054">
    <property type="entry name" value="EFh"/>
    <property type="match status" value="1"/>
</dbReference>
<dbReference type="SUPFAM" id="SSF47473">
    <property type="entry name" value="EF-hand"/>
    <property type="match status" value="1"/>
</dbReference>
<dbReference type="PROSITE" id="PS00018">
    <property type="entry name" value="EF_HAND_1"/>
    <property type="match status" value="1"/>
</dbReference>
<dbReference type="PROSITE" id="PS50222">
    <property type="entry name" value="EF_HAND_2"/>
    <property type="match status" value="1"/>
</dbReference>
<name>PRVB3_MERPO</name>
<keyword id="KW-0007">Acetylation</keyword>
<keyword id="KW-0020">Allergen</keyword>
<keyword id="KW-0106">Calcium</keyword>
<keyword id="KW-0903">Direct protein sequencing</keyword>
<keyword id="KW-0479">Metal-binding</keyword>
<keyword id="KW-0514">Muscle protein</keyword>
<sequence>AFAGVLADADIKAALAGCAAAESFNYKTFFKFFAIIDQDHSGFIEEEELKLFLQTFSAGARALSDAETK</sequence>
<reference evidence="8" key="1">
    <citation type="journal article" date="2010" name="J. Proteome Res.">
        <title>Extensive de novo sequencing of new parvalbumin isoforms using a novel combination of bottom-up proteomics, accurate molecular mass measurement by FTICR-MS, and selected MS/MS ion monitoring.</title>
        <authorList>
            <person name="Carrera M."/>
            <person name="Canas B."/>
            <person name="Vazquez J."/>
            <person name="Gallardo J.M."/>
        </authorList>
    </citation>
    <scope>PROTEIN SEQUENCE</scope>
    <scope>ACETYLATION AT ALA-1</scope>
    <source>
        <tissue evidence="6">Muscle</tissue>
    </source>
</reference>
<evidence type="ECO:0000250" key="1">
    <source>
        <dbReference type="UniProtKB" id="P02621"/>
    </source>
</evidence>
<evidence type="ECO:0000250" key="2">
    <source>
        <dbReference type="UniProtKB" id="P02622"/>
    </source>
</evidence>
<evidence type="ECO:0000250" key="3">
    <source>
        <dbReference type="UniProtKB" id="P02624"/>
    </source>
</evidence>
<evidence type="ECO:0000255" key="4"/>
<evidence type="ECO:0000255" key="5">
    <source>
        <dbReference type="PROSITE-ProRule" id="PRU00448"/>
    </source>
</evidence>
<evidence type="ECO:0000269" key="6">
    <source>
    </source>
</evidence>
<evidence type="ECO:0000303" key="7">
    <source>
    </source>
</evidence>
<evidence type="ECO:0000305" key="8"/>
<proteinExistence type="evidence at protein level"/>
<accession>P86772</accession>
<protein>
    <recommendedName>
        <fullName evidence="7">Parvalbumin beta 3</fullName>
    </recommendedName>
</protein>
<comment type="function">
    <text evidence="2 3">In muscle, parvalbumin is thought to be involved in relaxation after contraction. It binds two calcium ions (By similarity).</text>
</comment>
<comment type="miscellaneous">
    <text evidence="2 6">Is regarded as an important allergen.</text>
</comment>
<comment type="miscellaneous">
    <text evidence="6">On the 2D-gel the determined pI of this protein is: 3.84, its MW is: 11.35 kDa.</text>
</comment>
<comment type="similarity">
    <text evidence="4">Belongs to the parvalbumin family.</text>
</comment>
<feature type="chain" id="PRO_0000399433" description="Parvalbumin beta 3">
    <location>
        <begin position="1"/>
        <end position="69" status="greater than"/>
    </location>
</feature>
<feature type="domain" description="EF-hand" evidence="5">
    <location>
        <begin position="24"/>
        <end position="59"/>
    </location>
</feature>
<feature type="binding site" evidence="5">
    <location>
        <position position="37"/>
    </location>
    <ligand>
        <name>Ca(2+)</name>
        <dbReference type="ChEBI" id="CHEBI:29108"/>
        <label>1</label>
    </ligand>
</feature>
<feature type="binding site" evidence="5">
    <location>
        <position position="39"/>
    </location>
    <ligand>
        <name>Ca(2+)</name>
        <dbReference type="ChEBI" id="CHEBI:29108"/>
        <label>1</label>
    </ligand>
</feature>
<feature type="binding site" evidence="5">
    <location>
        <position position="41"/>
    </location>
    <ligand>
        <name>Ca(2+)</name>
        <dbReference type="ChEBI" id="CHEBI:29108"/>
        <label>1</label>
    </ligand>
</feature>
<feature type="binding site" evidence="1">
    <location>
        <position position="43"/>
    </location>
    <ligand>
        <name>Ca(2+)</name>
        <dbReference type="ChEBI" id="CHEBI:29108"/>
        <label>1</label>
    </ligand>
</feature>
<feature type="binding site" evidence="1">
    <location>
        <position position="45"/>
    </location>
    <ligand>
        <name>Ca(2+)</name>
        <dbReference type="ChEBI" id="CHEBI:29108"/>
        <label>1</label>
    </ligand>
</feature>
<feature type="binding site" evidence="5">
    <location>
        <position position="48"/>
    </location>
    <ligand>
        <name>Ca(2+)</name>
        <dbReference type="ChEBI" id="CHEBI:29108"/>
        <label>1</label>
    </ligand>
</feature>
<feature type="modified residue" description="N-acetylalanine" evidence="6">
    <location>
        <position position="1"/>
    </location>
</feature>
<feature type="unsure residue" description="L or I" evidence="6">
    <location>
        <position position="6"/>
    </location>
</feature>
<feature type="unsure residue" description="I or L" evidence="6">
    <location>
        <position position="11"/>
    </location>
</feature>
<feature type="unsure residue" description="K or Q" evidence="6">
    <location>
        <position position="12"/>
    </location>
</feature>
<feature type="unsure residue" description="L or I" evidence="6">
    <location>
        <position position="15"/>
    </location>
</feature>
<feature type="unsure residue" description="K or Q" evidence="6">
    <location>
        <position position="27"/>
    </location>
</feature>
<feature type="unsure residue" description="K or Q" evidence="6">
    <location>
        <position position="31"/>
    </location>
</feature>
<feature type="unsure residue" description="I or L" evidence="6">
    <location>
        <position position="35"/>
    </location>
</feature>
<feature type="unsure residue" description="I or L" evidence="6">
    <location>
        <position position="36"/>
    </location>
</feature>
<feature type="unsure residue" description="Q or K" evidence="6">
    <location>
        <position position="38"/>
    </location>
</feature>
<feature type="unsure residue" description="I or L" evidence="6">
    <location>
        <position position="44"/>
    </location>
</feature>
<feature type="unsure residue" description="L or I" evidence="6">
    <location>
        <position position="49"/>
    </location>
</feature>
<feature type="unsure residue" description="K or Q" evidence="6">
    <location>
        <position position="50"/>
    </location>
</feature>
<feature type="unsure residue" description="L or I" evidence="6">
    <location>
        <position position="51"/>
    </location>
</feature>
<feature type="unsure residue" description="L or I" evidence="6">
    <location>
        <position position="53"/>
    </location>
</feature>
<feature type="unsure residue" description="Q or K" evidence="6">
    <location>
        <position position="54"/>
    </location>
</feature>
<feature type="unsure residue" description="L or I" evidence="6">
    <location>
        <position position="63"/>
    </location>
</feature>
<feature type="unsure residue" description="K or Q" evidence="6">
    <location>
        <position position="69"/>
    </location>
</feature>
<feature type="non-consecutive residues" evidence="7">
    <location>
        <begin position="31"/>
        <end position="32"/>
    </location>
</feature>
<feature type="non-terminal residue" evidence="7">
    <location>
        <position position="69"/>
    </location>
</feature>